<gene>
    <name type="primary">neo</name>
    <name type="synonym">kan</name>
    <name type="synonym">nptII</name>
</gene>
<protein>
    <recommendedName>
        <fullName>Aminoglycoside 3'-phosphotransferase</fullName>
        <ecNumber>2.7.1.95</ecNumber>
    </recommendedName>
    <alternativeName>
        <fullName>APH(3')-II</fullName>
        <shortName>APH(3')II</shortName>
    </alternativeName>
    <alternativeName>
        <fullName>Kanamycin kinase, type II</fullName>
    </alternativeName>
    <alternativeName>
        <fullName>Neomycin-kanamycin phosphotransferase type II</fullName>
    </alternativeName>
</protein>
<keyword id="KW-0002">3D-structure</keyword>
<keyword id="KW-0046">Antibiotic resistance</keyword>
<keyword id="KW-0067">ATP-binding</keyword>
<keyword id="KW-0418">Kinase</keyword>
<keyword id="KW-0460">Magnesium</keyword>
<keyword id="KW-0479">Metal-binding</keyword>
<keyword id="KW-0547">Nucleotide-binding</keyword>
<keyword id="KW-0808">Transferase</keyword>
<keyword id="KW-0814">Transposable element</keyword>
<feature type="chain" id="PRO_0000204804" description="Aminoglycoside 3'-phosphotransferase">
    <location>
        <begin position="1"/>
        <end position="264"/>
    </location>
</feature>
<feature type="active site" description="Proton acceptor" evidence="1">
    <location>
        <position position="190"/>
    </location>
</feature>
<feature type="binding site">
    <location>
        <position position="195"/>
    </location>
    <ligand>
        <name>Mg(2+)</name>
        <dbReference type="ChEBI" id="CHEBI:18420"/>
    </ligand>
</feature>
<feature type="binding site">
    <location>
        <position position="208"/>
    </location>
    <ligand>
        <name>Mg(2+)</name>
        <dbReference type="ChEBI" id="CHEBI:18420"/>
    </ligand>
</feature>
<feature type="helix" evidence="3">
    <location>
        <begin position="13"/>
        <end position="15"/>
    </location>
</feature>
<feature type="turn" evidence="3">
    <location>
        <begin position="16"/>
        <end position="21"/>
    </location>
</feature>
<feature type="strand" evidence="3">
    <location>
        <begin position="23"/>
        <end position="26"/>
    </location>
</feature>
<feature type="strand" evidence="3">
    <location>
        <begin position="35"/>
        <end position="40"/>
    </location>
</feature>
<feature type="strand" evidence="3">
    <location>
        <begin position="47"/>
        <end position="52"/>
    </location>
</feature>
<feature type="helix" evidence="3">
    <location>
        <begin position="60"/>
        <end position="71"/>
    </location>
</feature>
<feature type="turn" evidence="3">
    <location>
        <begin position="72"/>
        <end position="74"/>
    </location>
</feature>
<feature type="strand" evidence="3">
    <location>
        <begin position="80"/>
        <end position="85"/>
    </location>
</feature>
<feature type="strand" evidence="3">
    <location>
        <begin position="90"/>
        <end position="95"/>
    </location>
</feature>
<feature type="strand" evidence="3">
    <location>
        <begin position="98"/>
        <end position="101"/>
    </location>
</feature>
<feature type="turn" evidence="3">
    <location>
        <begin position="102"/>
        <end position="104"/>
    </location>
</feature>
<feature type="helix" evidence="3">
    <location>
        <begin position="109"/>
        <end position="123"/>
    </location>
</feature>
<feature type="helix" evidence="3">
    <location>
        <begin position="128"/>
        <end position="130"/>
    </location>
</feature>
<feature type="helix" evidence="3">
    <location>
        <begin position="137"/>
        <end position="149"/>
    </location>
</feature>
<feature type="helix" evidence="3">
    <location>
        <begin position="160"/>
        <end position="162"/>
    </location>
</feature>
<feature type="helix" evidence="3">
    <location>
        <begin position="167"/>
        <end position="176"/>
    </location>
</feature>
<feature type="strand" evidence="3">
    <location>
        <begin position="184"/>
        <end position="187"/>
    </location>
</feature>
<feature type="helix" evidence="3">
    <location>
        <begin position="193"/>
        <end position="195"/>
    </location>
</feature>
<feature type="strand" evidence="3">
    <location>
        <begin position="196"/>
        <end position="199"/>
    </location>
</feature>
<feature type="strand" evidence="3">
    <location>
        <begin position="202"/>
        <end position="206"/>
    </location>
</feature>
<feature type="strand" evidence="3">
    <location>
        <begin position="213"/>
        <end position="216"/>
    </location>
</feature>
<feature type="helix" evidence="3">
    <location>
        <begin position="218"/>
        <end position="232"/>
    </location>
</feature>
<feature type="helix" evidence="3">
    <location>
        <begin position="234"/>
        <end position="244"/>
    </location>
</feature>
<feature type="helix" evidence="3">
    <location>
        <begin position="251"/>
        <end position="260"/>
    </location>
</feature>
<feature type="helix" evidence="3">
    <location>
        <begin position="261"/>
        <end position="263"/>
    </location>
</feature>
<reference key="1">
    <citation type="journal article" date="1982" name="Gene">
        <title>Nucleotide sequence and exact localization of the neomycin phosphotransferase gene from transposon Tn5.</title>
        <authorList>
            <person name="Beck E."/>
            <person name="Ludwig G."/>
            <person name="Auerswald E.A."/>
            <person name="Reiss B."/>
            <person name="Schaller H."/>
        </authorList>
    </citation>
    <scope>NUCLEOTIDE SEQUENCE [GENOMIC DNA]</scope>
    <source>
        <transposon>Tn5</transposon>
    </source>
</reference>
<reference key="2">
    <citation type="submission" date="1995-08" db="EMBL/GenBank/DDBJ databases">
        <title>DNA sequence of a mini-Tn5 transposon (mini-Tn5 Km).</title>
        <authorList>
            <person name="Pinyon R.A."/>
            <person name="Thomas C.J."/>
        </authorList>
    </citation>
    <scope>NUCLEOTIDE SEQUENCE [GENOMIC DNA]</scope>
    <source>
        <strain>SM10</strain>
        <transposon>Tn5</transposon>
    </source>
</reference>
<reference key="3">
    <citation type="journal article" date="1985" name="Nucleic Acids Res.">
        <title>Completion of the nucleotide sequence of the central region of Tn5 confirms the presence of three resistance genes.</title>
        <authorList>
            <person name="Mazodier P."/>
            <person name="Cossart P."/>
            <person name="Giraud E."/>
            <person name="Gasser F."/>
        </authorList>
    </citation>
    <scope>NUCLEOTIDE SEQUENCE [GENOMIC DNA] OF 251-264</scope>
    <source>
        <transposon>Tn5</transposon>
    </source>
</reference>
<reference key="4">
    <citation type="journal article" date="2003" name="J. Mol. Biol.">
        <title>The crystal structure of aminoglycoside-3'-phosphotransferase-IIa, an enzyme responsible for antibiotic resistance.</title>
        <authorList>
            <person name="Nurizzo D."/>
            <person name="Shewry S.C."/>
            <person name="Perlin M.H."/>
            <person name="Brown S.A."/>
            <person name="Dholakia J.N."/>
            <person name="Fuchs R.L."/>
            <person name="Deva T."/>
            <person name="Baker E.N."/>
            <person name="Smith C.A."/>
        </authorList>
    </citation>
    <scope>X-RAY CRYSTALLOGRAPHY (2.1 ANGSTROMS) IN COMPLEX WITH KANAMYCIN</scope>
    <scope>ACTIVE SITE</scope>
</reference>
<name>KKA2_KLEPN</name>
<dbReference type="EC" id="2.7.1.95"/>
<dbReference type="EMBL" id="U00004">
    <property type="protein sequence ID" value="AAA73390.1"/>
    <property type="molecule type" value="Unassigned_DNA"/>
</dbReference>
<dbReference type="EMBL" id="V00618">
    <property type="protein sequence ID" value="CAA23892.1"/>
    <property type="molecule type" value="Genomic_DNA"/>
</dbReference>
<dbReference type="EMBL" id="U32991">
    <property type="protein sequence ID" value="AAA85506.1"/>
    <property type="molecule type" value="Genomic_DNA"/>
</dbReference>
<dbReference type="EMBL" id="X01702">
    <property type="protein sequence ID" value="CAA25852.1"/>
    <property type="molecule type" value="Genomic_DNA"/>
</dbReference>
<dbReference type="EMBL" id="U66885">
    <property type="protein sequence ID" value="AAC48873.1"/>
    <property type="molecule type" value="Genomic_DNA"/>
</dbReference>
<dbReference type="PIR" id="A00663">
    <property type="entry name" value="PKECT5"/>
</dbReference>
<dbReference type="RefSeq" id="WP_000572405.1">
    <property type="nucleotide sequence ID" value="NZ_VKSL01000036.1"/>
</dbReference>
<dbReference type="PDB" id="1ND4">
    <property type="method" value="X-ray"/>
    <property type="resolution" value="2.10 A"/>
    <property type="chains" value="A/B=1-264"/>
</dbReference>
<dbReference type="PDBsum" id="1ND4"/>
<dbReference type="BMRB" id="P00552"/>
<dbReference type="SMR" id="P00552"/>
<dbReference type="CARD" id="ARO:3002644">
    <property type="molecule name" value="APH(3')-IIa"/>
    <property type="mechanism identifier" value="ARO:0001004"/>
    <property type="mechanism name" value="antibiotic inactivation"/>
</dbReference>
<dbReference type="KEGG" id="ag:CAA23892"/>
<dbReference type="EvolutionaryTrace" id="P00552"/>
<dbReference type="GO" id="GO:0005524">
    <property type="term" value="F:ATP binding"/>
    <property type="evidence" value="ECO:0007669"/>
    <property type="project" value="UniProtKB-KW"/>
</dbReference>
<dbReference type="GO" id="GO:0008910">
    <property type="term" value="F:kanamycin kinase activity"/>
    <property type="evidence" value="ECO:0007669"/>
    <property type="project" value="UniProtKB-EC"/>
</dbReference>
<dbReference type="GO" id="GO:0046872">
    <property type="term" value="F:metal ion binding"/>
    <property type="evidence" value="ECO:0007669"/>
    <property type="project" value="UniProtKB-KW"/>
</dbReference>
<dbReference type="GO" id="GO:0046677">
    <property type="term" value="P:response to antibiotic"/>
    <property type="evidence" value="ECO:0007669"/>
    <property type="project" value="UniProtKB-KW"/>
</dbReference>
<dbReference type="CDD" id="cd05150">
    <property type="entry name" value="APH"/>
    <property type="match status" value="1"/>
</dbReference>
<dbReference type="Gene3D" id="3.90.1200.10">
    <property type="match status" value="1"/>
</dbReference>
<dbReference type="Gene3D" id="3.30.200.20">
    <property type="entry name" value="Phosphorylase Kinase, domain 1"/>
    <property type="match status" value="1"/>
</dbReference>
<dbReference type="InterPro" id="IPR051678">
    <property type="entry name" value="AGP_Transferase"/>
</dbReference>
<dbReference type="InterPro" id="IPR002575">
    <property type="entry name" value="Aminoglycoside_PTrfase"/>
</dbReference>
<dbReference type="InterPro" id="IPR024165">
    <property type="entry name" value="Kan/Strep_kinase"/>
</dbReference>
<dbReference type="InterPro" id="IPR011009">
    <property type="entry name" value="Kinase-like_dom_sf"/>
</dbReference>
<dbReference type="NCBIfam" id="NF033068">
    <property type="entry name" value="APH_3p"/>
    <property type="match status" value="1"/>
</dbReference>
<dbReference type="NCBIfam" id="NF032898">
    <property type="entry name" value="APH_3p_II"/>
    <property type="match status" value="1"/>
</dbReference>
<dbReference type="PANTHER" id="PTHR21310:SF41">
    <property type="entry name" value="3'-PHOSPHOTRANSFERASE, PUTATIVE-RELATED"/>
    <property type="match status" value="1"/>
</dbReference>
<dbReference type="PANTHER" id="PTHR21310">
    <property type="entry name" value="AMINOGLYCOSIDE PHOSPHOTRANSFERASE-RELATED-RELATED"/>
    <property type="match status" value="1"/>
</dbReference>
<dbReference type="Pfam" id="PF01636">
    <property type="entry name" value="APH"/>
    <property type="match status" value="1"/>
</dbReference>
<dbReference type="PIRSF" id="PIRSF000706">
    <property type="entry name" value="Kanamycin_kin"/>
    <property type="match status" value="1"/>
</dbReference>
<dbReference type="SUPFAM" id="SSF56112">
    <property type="entry name" value="Protein kinase-like (PK-like)"/>
    <property type="match status" value="1"/>
</dbReference>
<comment type="function">
    <text>Resistance to kanamycin, neomycin, paromomycin, ribostamycin, butirosin and gentamicin B.</text>
</comment>
<comment type="catalytic activity">
    <reaction>
        <text>kanamycin A + ATP = kanamycin 3'-phosphate + ADP + H(+)</text>
        <dbReference type="Rhea" id="RHEA:24256"/>
        <dbReference type="ChEBI" id="CHEBI:15378"/>
        <dbReference type="ChEBI" id="CHEBI:30616"/>
        <dbReference type="ChEBI" id="CHEBI:57909"/>
        <dbReference type="ChEBI" id="CHEBI:58214"/>
        <dbReference type="ChEBI" id="CHEBI:456216"/>
        <dbReference type="EC" id="2.7.1.95"/>
    </reaction>
</comment>
<comment type="miscellaneous">
    <text>This enzyme is encoded by the kanamycin and neomycin resistance transposon Tn5. Tn5 was originally isolated from K.pneumoniae, but has been transferred to a number of bacteria including E.coli.</text>
</comment>
<comment type="similarity">
    <text evidence="2">Belongs to the aminoglycoside phosphotransferase family.</text>
</comment>
<proteinExistence type="evidence at protein level"/>
<evidence type="ECO:0000269" key="1">
    <source>
    </source>
</evidence>
<evidence type="ECO:0000305" key="2"/>
<evidence type="ECO:0007829" key="3">
    <source>
        <dbReference type="PDB" id="1ND4"/>
    </source>
</evidence>
<sequence length="264" mass="29048">MIEQDGLHAGSPAAWVERLFGYDWAQQTIGCSDAAVFRLSAQGRPVLFVKTDLSGALNELQDEAARLSWLATTGVPCAAVLDVVTEAGRDWLLLGEVPGQDLLSSHLAPAEKVSIMADAMRRLHTLDPATCPFDHQAKHRIERARTRMEAGLVDQDDLDEEHQGLAPAELFARLKARMPDGEDLVVTHGDACLPNIMVENGRFSGFIDCGRLGVADRYQDIALATRDIAEELGGEWADRFLVLYGIAAPDSQRIAFYRLLDEFF</sequence>
<accession>P00552</accession>
<accession>Q6LCR6</accession>
<organism>
    <name type="scientific">Klebsiella pneumoniae</name>
    <dbReference type="NCBI Taxonomy" id="573"/>
    <lineage>
        <taxon>Bacteria</taxon>
        <taxon>Pseudomonadati</taxon>
        <taxon>Pseudomonadota</taxon>
        <taxon>Gammaproteobacteria</taxon>
        <taxon>Enterobacterales</taxon>
        <taxon>Enterobacteriaceae</taxon>
        <taxon>Klebsiella/Raoultella group</taxon>
        <taxon>Klebsiella</taxon>
        <taxon>Klebsiella pneumoniae complex</taxon>
    </lineage>
</organism>